<sequence length="157" mass="17665">MAKVESFTLDHTAVKAPYVRLITRETGTKGDVISNFDLRLVQPNENAIPTAGLHTIEHLLAGYLRDEMSGVIDCSPFGCRTGFHLITWDEQSTEEVAKALKASLHRIAYDTEWKDVQGTDKYSCGNYRDHSLFSAKEWCKAILDEGISKDPFTREVI</sequence>
<feature type="chain" id="PRO_0000298004" description="S-ribosylhomocysteine lyase">
    <location>
        <begin position="1"/>
        <end position="157"/>
    </location>
</feature>
<feature type="binding site" evidence="1">
    <location>
        <position position="54"/>
    </location>
    <ligand>
        <name>Fe cation</name>
        <dbReference type="ChEBI" id="CHEBI:24875"/>
    </ligand>
</feature>
<feature type="binding site" evidence="1">
    <location>
        <position position="58"/>
    </location>
    <ligand>
        <name>Fe cation</name>
        <dbReference type="ChEBI" id="CHEBI:24875"/>
    </ligand>
</feature>
<feature type="binding site" evidence="1">
    <location>
        <position position="124"/>
    </location>
    <ligand>
        <name>Fe cation</name>
        <dbReference type="ChEBI" id="CHEBI:24875"/>
    </ligand>
</feature>
<accession>Q03TG6</accession>
<keyword id="KW-0071">Autoinducer synthesis</keyword>
<keyword id="KW-0408">Iron</keyword>
<keyword id="KW-0456">Lyase</keyword>
<keyword id="KW-0479">Metal-binding</keyword>
<keyword id="KW-0673">Quorum sensing</keyword>
<keyword id="KW-1185">Reference proteome</keyword>
<evidence type="ECO:0000255" key="1">
    <source>
        <dbReference type="HAMAP-Rule" id="MF_00091"/>
    </source>
</evidence>
<name>LUXS_LEVBA</name>
<reference key="1">
    <citation type="journal article" date="2006" name="Proc. Natl. Acad. Sci. U.S.A.">
        <title>Comparative genomics of the lactic acid bacteria.</title>
        <authorList>
            <person name="Makarova K.S."/>
            <person name="Slesarev A."/>
            <person name="Wolf Y.I."/>
            <person name="Sorokin A."/>
            <person name="Mirkin B."/>
            <person name="Koonin E.V."/>
            <person name="Pavlov A."/>
            <person name="Pavlova N."/>
            <person name="Karamychev V."/>
            <person name="Polouchine N."/>
            <person name="Shakhova V."/>
            <person name="Grigoriev I."/>
            <person name="Lou Y."/>
            <person name="Rohksar D."/>
            <person name="Lucas S."/>
            <person name="Huang K."/>
            <person name="Goodstein D.M."/>
            <person name="Hawkins T."/>
            <person name="Plengvidhya V."/>
            <person name="Welker D."/>
            <person name="Hughes J."/>
            <person name="Goh Y."/>
            <person name="Benson A."/>
            <person name="Baldwin K."/>
            <person name="Lee J.-H."/>
            <person name="Diaz-Muniz I."/>
            <person name="Dosti B."/>
            <person name="Smeianov V."/>
            <person name="Wechter W."/>
            <person name="Barabote R."/>
            <person name="Lorca G."/>
            <person name="Altermann E."/>
            <person name="Barrangou R."/>
            <person name="Ganesan B."/>
            <person name="Xie Y."/>
            <person name="Rawsthorne H."/>
            <person name="Tamir D."/>
            <person name="Parker C."/>
            <person name="Breidt F."/>
            <person name="Broadbent J.R."/>
            <person name="Hutkins R."/>
            <person name="O'Sullivan D."/>
            <person name="Steele J."/>
            <person name="Unlu G."/>
            <person name="Saier M.H. Jr."/>
            <person name="Klaenhammer T."/>
            <person name="Richardson P."/>
            <person name="Kozyavkin S."/>
            <person name="Weimer B.C."/>
            <person name="Mills D.A."/>
        </authorList>
    </citation>
    <scope>NUCLEOTIDE SEQUENCE [LARGE SCALE GENOMIC DNA]</scope>
    <source>
        <strain>ATCC 367 / BCRC 12310 / CIP 105137 / JCM 1170 / LMG 11437 / NCIMB 947 / NCTC 947</strain>
    </source>
</reference>
<gene>
    <name evidence="1" type="primary">luxS</name>
    <name type="ordered locus">LVIS_0340</name>
</gene>
<protein>
    <recommendedName>
        <fullName evidence="1">S-ribosylhomocysteine lyase</fullName>
        <ecNumber evidence="1">4.4.1.21</ecNumber>
    </recommendedName>
    <alternativeName>
        <fullName evidence="1">AI-2 synthesis protein</fullName>
    </alternativeName>
    <alternativeName>
        <fullName evidence="1">Autoinducer-2 production protein LuxS</fullName>
    </alternativeName>
</protein>
<comment type="function">
    <text evidence="1">Involved in the synthesis of autoinducer 2 (AI-2) which is secreted by bacteria and is used to communicate both the cell density and the metabolic potential of the environment. The regulation of gene expression in response to changes in cell density is called quorum sensing. Catalyzes the transformation of S-ribosylhomocysteine (RHC) to homocysteine (HC) and 4,5-dihydroxy-2,3-pentadione (DPD).</text>
</comment>
<comment type="catalytic activity">
    <reaction evidence="1">
        <text>S-(5-deoxy-D-ribos-5-yl)-L-homocysteine = (S)-4,5-dihydroxypentane-2,3-dione + L-homocysteine</text>
        <dbReference type="Rhea" id="RHEA:17753"/>
        <dbReference type="ChEBI" id="CHEBI:29484"/>
        <dbReference type="ChEBI" id="CHEBI:58195"/>
        <dbReference type="ChEBI" id="CHEBI:58199"/>
        <dbReference type="EC" id="4.4.1.21"/>
    </reaction>
</comment>
<comment type="cofactor">
    <cofactor evidence="1">
        <name>Fe cation</name>
        <dbReference type="ChEBI" id="CHEBI:24875"/>
    </cofactor>
    <text evidence="1">Binds 1 Fe cation per subunit.</text>
</comment>
<comment type="subunit">
    <text evidence="1">Homodimer.</text>
</comment>
<comment type="similarity">
    <text evidence="1">Belongs to the LuxS family.</text>
</comment>
<proteinExistence type="inferred from homology"/>
<organism>
    <name type="scientific">Levilactobacillus brevis (strain ATCC 367 / BCRC 12310 / CIP 105137 / JCM 1170 / LMG 11437 / NCIMB 947 / NCTC 947)</name>
    <name type="common">Lactobacillus brevis</name>
    <dbReference type="NCBI Taxonomy" id="387344"/>
    <lineage>
        <taxon>Bacteria</taxon>
        <taxon>Bacillati</taxon>
        <taxon>Bacillota</taxon>
        <taxon>Bacilli</taxon>
        <taxon>Lactobacillales</taxon>
        <taxon>Lactobacillaceae</taxon>
        <taxon>Levilactobacillus</taxon>
    </lineage>
</organism>
<dbReference type="EC" id="4.4.1.21" evidence="1"/>
<dbReference type="EMBL" id="CP000416">
    <property type="protein sequence ID" value="ABJ63506.1"/>
    <property type="molecule type" value="Genomic_DNA"/>
</dbReference>
<dbReference type="RefSeq" id="WP_011667134.1">
    <property type="nucleotide sequence ID" value="NC_008497.1"/>
</dbReference>
<dbReference type="SMR" id="Q03TG6"/>
<dbReference type="STRING" id="387344.LVIS_0340"/>
<dbReference type="KEGG" id="lbr:LVIS_0340"/>
<dbReference type="PATRIC" id="fig|387344.15.peg.334"/>
<dbReference type="eggNOG" id="COG1854">
    <property type="taxonomic scope" value="Bacteria"/>
</dbReference>
<dbReference type="HOGENOM" id="CLU_107531_2_1_9"/>
<dbReference type="Proteomes" id="UP000001652">
    <property type="component" value="Chromosome"/>
</dbReference>
<dbReference type="GO" id="GO:0005506">
    <property type="term" value="F:iron ion binding"/>
    <property type="evidence" value="ECO:0007669"/>
    <property type="project" value="InterPro"/>
</dbReference>
<dbReference type="GO" id="GO:0043768">
    <property type="term" value="F:S-ribosylhomocysteine lyase activity"/>
    <property type="evidence" value="ECO:0007669"/>
    <property type="project" value="UniProtKB-UniRule"/>
</dbReference>
<dbReference type="GO" id="GO:0009372">
    <property type="term" value="P:quorum sensing"/>
    <property type="evidence" value="ECO:0007669"/>
    <property type="project" value="UniProtKB-UniRule"/>
</dbReference>
<dbReference type="Gene3D" id="3.30.1360.80">
    <property type="entry name" value="S-ribosylhomocysteinase (LuxS)"/>
    <property type="match status" value="1"/>
</dbReference>
<dbReference type="HAMAP" id="MF_00091">
    <property type="entry name" value="LuxS"/>
    <property type="match status" value="1"/>
</dbReference>
<dbReference type="InterPro" id="IPR037005">
    <property type="entry name" value="LuxS_sf"/>
</dbReference>
<dbReference type="InterPro" id="IPR011249">
    <property type="entry name" value="Metalloenz_LuxS/M16"/>
</dbReference>
<dbReference type="InterPro" id="IPR003815">
    <property type="entry name" value="S-ribosylhomocysteinase"/>
</dbReference>
<dbReference type="NCBIfam" id="NF002606">
    <property type="entry name" value="PRK02260.2-4"/>
    <property type="match status" value="1"/>
</dbReference>
<dbReference type="NCBIfam" id="NF002608">
    <property type="entry name" value="PRK02260.3-1"/>
    <property type="match status" value="1"/>
</dbReference>
<dbReference type="PANTHER" id="PTHR35799">
    <property type="entry name" value="S-RIBOSYLHOMOCYSTEINE LYASE"/>
    <property type="match status" value="1"/>
</dbReference>
<dbReference type="PANTHER" id="PTHR35799:SF1">
    <property type="entry name" value="S-RIBOSYLHOMOCYSTEINE LYASE"/>
    <property type="match status" value="1"/>
</dbReference>
<dbReference type="Pfam" id="PF02664">
    <property type="entry name" value="LuxS"/>
    <property type="match status" value="1"/>
</dbReference>
<dbReference type="PIRSF" id="PIRSF006160">
    <property type="entry name" value="AI2"/>
    <property type="match status" value="1"/>
</dbReference>
<dbReference type="PRINTS" id="PR01487">
    <property type="entry name" value="LUXSPROTEIN"/>
</dbReference>
<dbReference type="SUPFAM" id="SSF63411">
    <property type="entry name" value="LuxS/MPP-like metallohydrolase"/>
    <property type="match status" value="1"/>
</dbReference>